<name>PRP_PHAVU</name>
<comment type="subcellular location">
    <subcellularLocation>
        <location evidence="2">Secreted</location>
        <location evidence="2">Cell wall</location>
    </subcellularLocation>
</comment>
<comment type="similarity">
    <text evidence="4">Belongs to the plant proline-rich protein superfamily. ENOD12 family.</text>
</comment>
<reference evidence="4" key="1">
    <citation type="journal article" date="1997" name="J. Biol. Chem.">
        <title>Differential extraction and protein sequencing reveals major differences in patterns of primary cell wall proteins from plants.</title>
        <authorList>
            <person name="Robertson D."/>
            <person name="Mitchell G.P."/>
            <person name="Gilroy J.S."/>
            <person name="Gerrish C."/>
            <person name="Bolwell G.P."/>
            <person name="Slabas A.R."/>
        </authorList>
    </citation>
    <scope>PROTEIN SEQUENCE</scope>
    <scope>SUBCELLULAR LOCATION</scope>
    <scope>HYDROXYLATION AT PRO-6; PRO-11; PRO-16 AND PRO-21</scope>
</reference>
<proteinExistence type="evidence at protein level"/>
<accession>P80760</accession>
<accession>P80761</accession>
<organism>
    <name type="scientific">Phaseolus vulgaris</name>
    <name type="common">Kidney bean</name>
    <name type="synonym">French bean</name>
    <dbReference type="NCBI Taxonomy" id="3885"/>
    <lineage>
        <taxon>Eukaryota</taxon>
        <taxon>Viridiplantae</taxon>
        <taxon>Streptophyta</taxon>
        <taxon>Embryophyta</taxon>
        <taxon>Tracheophyta</taxon>
        <taxon>Spermatophyta</taxon>
        <taxon>Magnoliopsida</taxon>
        <taxon>eudicotyledons</taxon>
        <taxon>Gunneridae</taxon>
        <taxon>Pentapetalae</taxon>
        <taxon>rosids</taxon>
        <taxon>fabids</taxon>
        <taxon>Fabales</taxon>
        <taxon>Fabaceae</taxon>
        <taxon>Papilionoideae</taxon>
        <taxon>50 kb inversion clade</taxon>
        <taxon>NPAAA clade</taxon>
        <taxon>indigoferoid/millettioid clade</taxon>
        <taxon>Phaseoleae</taxon>
        <taxon>Phaseolus</taxon>
    </lineage>
</organism>
<sequence length="25" mass="2906">NYDKPPVEKPPVYKPPVEKPPVYKP</sequence>
<dbReference type="eggNOG" id="ENOG502S0UH">
    <property type="taxonomic scope" value="Eukaryota"/>
</dbReference>
<dbReference type="GO" id="GO:0005576">
    <property type="term" value="C:extracellular region"/>
    <property type="evidence" value="ECO:0007669"/>
    <property type="project" value="UniProtKB-KW"/>
</dbReference>
<evidence type="ECO:0000256" key="1">
    <source>
        <dbReference type="SAM" id="MobiDB-lite"/>
    </source>
</evidence>
<evidence type="ECO:0000269" key="2">
    <source>
    </source>
</evidence>
<evidence type="ECO:0000303" key="3">
    <source>
    </source>
</evidence>
<evidence type="ECO:0000305" key="4"/>
<protein>
    <recommendedName>
        <fullName>Repetitive proline-rich cell wall protein</fullName>
    </recommendedName>
</protein>
<keyword id="KW-0134">Cell wall</keyword>
<keyword id="KW-0903">Direct protein sequencing</keyword>
<keyword id="KW-0379">Hydroxylation</keyword>
<keyword id="KW-0677">Repeat</keyword>
<keyword id="KW-0964">Secreted</keyword>
<feature type="chain" id="PRO_0000213732" description="Repetitive proline-rich cell wall protein">
    <location>
        <begin position="1"/>
        <end position="25" status="greater than"/>
    </location>
</feature>
<feature type="repeat" description="1" evidence="4">
    <location>
        <begin position="5"/>
        <end position="9"/>
    </location>
</feature>
<feature type="repeat" description="2" evidence="4">
    <location>
        <begin position="10"/>
        <end position="14"/>
    </location>
</feature>
<feature type="repeat" description="3" evidence="4">
    <location>
        <begin position="15"/>
        <end position="19"/>
    </location>
</feature>
<feature type="repeat" description="4" evidence="4">
    <location>
        <begin position="20"/>
        <end position="24"/>
    </location>
</feature>
<feature type="region of interest" description="Disordered" evidence="1">
    <location>
        <begin position="1"/>
        <end position="25"/>
    </location>
</feature>
<feature type="region of interest" description="4 X 5 AA tandem repeats of P-P-V-[EY]-K" evidence="4">
    <location>
        <begin position="5"/>
        <end position="24"/>
    </location>
</feature>
<feature type="compositionally biased region" description="Pro residues" evidence="1">
    <location>
        <begin position="8"/>
        <end position="25"/>
    </location>
</feature>
<feature type="modified residue" description="4-hydroxyproline" evidence="2">
    <location>
        <position position="6"/>
    </location>
</feature>
<feature type="modified residue" description="4-hydroxyproline" evidence="2">
    <location>
        <position position="11"/>
    </location>
</feature>
<feature type="modified residue" description="4-hydroxyproline" evidence="2">
    <location>
        <position position="16"/>
    </location>
</feature>
<feature type="modified residue" description="4-hydroxyproline" evidence="2">
    <location>
        <position position="21"/>
    </location>
</feature>
<feature type="non-terminal residue" evidence="3">
    <location>
        <position position="25"/>
    </location>
</feature>